<sequence length="846" mass="92422">MAEITVGQLAQQTNKEVDALLKQLKSFGIEKSSEKDTLTPTEMKTLLEKINSAKNTATRKKVTSVKLDGKHKINVSVKRKRRVAKKMEQQESTTLEQPQELETMVQEVSQQVDIVKEQDNIEQIVENKEAVKVQEQRQAEIAKPVIKDSGFKITAMPEIKIEEIVAEDDEGLAASDKQAKKKAAKKVFSEAVNTNTKYKREEEEKKSKAKKAGGKGFKKANPRQLSQLAGDLESFDEFGAKKGKLKAPKVKKQEFTKPVENTVRTVEIYEGITVSELAQKMAVKGAEIVKVLFNMGVMATINQSLDQDTAILIVEEMGHKYTLHNENALEEAVTIVDRSSYKKISRAPVVTIMGHVDHGKTSLLDYIRQTRVVAGEAGGITQHIGAYSVKTDKGSITFLDTPGHEAFTSMRARGAKSTDIVILVVAADDGVMPQTEEAIQHAKAARVPIVVAVNKIDKPEADSDKVISELAQRNVIPESWGGDVMFVNVSAKTGEGVADLLEAVLLQSEVLELEAFAEGLAEGVVIESRLEKGRGPVATVLVQNGNLKQGDNILCGTEYGRVRAMHNDLGKKIKAAGPATPVEILGLSGVPAAGDEMVVIENEKKAKELAAQRSQKQKEAKIAQEQSLKLSNMFNNMGKEGEQQVLKIILKGDVQGSVEAIRESLLKLSTDEVKVDIIASGIGAITSSDVTLAVASTAVVIGFNVRADSAAKKLAETDGVEFRYYNIIYDLIDDVKKAMSGLLSPEMKEQIIGIAEVREVYRSSKFGSIAGCMVIEGVVKRTNPIRVLRNNVVIYEGTLESLKRFKDDASEVKKGLECGIGVKNYNDVREGDQIEVFEVIEVAKEL</sequence>
<protein>
    <recommendedName>
        <fullName evidence="2">Translation initiation factor IF-2</fullName>
    </recommendedName>
</protein>
<gene>
    <name evidence="2" type="primary">infB</name>
    <name type="ordered locus">FTL_1809</name>
</gene>
<comment type="function">
    <text evidence="2">One of the essential components for the initiation of protein synthesis. Protects formylmethionyl-tRNA from spontaneous hydrolysis and promotes its binding to the 30S ribosomal subunits. Also involved in the hydrolysis of GTP during the formation of the 70S ribosomal complex.</text>
</comment>
<comment type="subcellular location">
    <subcellularLocation>
        <location evidence="2">Cytoplasm</location>
    </subcellularLocation>
</comment>
<comment type="similarity">
    <text evidence="2">Belongs to the TRAFAC class translation factor GTPase superfamily. Classic translation factor GTPase family. IF-2 subfamily.</text>
</comment>
<reference key="1">
    <citation type="submission" date="2006-03" db="EMBL/GenBank/DDBJ databases">
        <title>Complete genome sequence of Francisella tularensis LVS (Live Vaccine Strain).</title>
        <authorList>
            <person name="Chain P."/>
            <person name="Larimer F."/>
            <person name="Land M."/>
            <person name="Stilwagen S."/>
            <person name="Larsson P."/>
            <person name="Bearden S."/>
            <person name="Chu M."/>
            <person name="Oyston P."/>
            <person name="Forsman M."/>
            <person name="Andersson S."/>
            <person name="Lindler L."/>
            <person name="Titball R."/>
            <person name="Garcia E."/>
        </authorList>
    </citation>
    <scope>NUCLEOTIDE SEQUENCE [LARGE SCALE GENOMIC DNA]</scope>
    <source>
        <strain>LVS</strain>
    </source>
</reference>
<name>IF2_FRATH</name>
<organism>
    <name type="scientific">Francisella tularensis subsp. holarctica (strain LVS)</name>
    <dbReference type="NCBI Taxonomy" id="376619"/>
    <lineage>
        <taxon>Bacteria</taxon>
        <taxon>Pseudomonadati</taxon>
        <taxon>Pseudomonadota</taxon>
        <taxon>Gammaproteobacteria</taxon>
        <taxon>Thiotrichales</taxon>
        <taxon>Francisellaceae</taxon>
        <taxon>Francisella</taxon>
    </lineage>
</organism>
<evidence type="ECO:0000250" key="1"/>
<evidence type="ECO:0000255" key="2">
    <source>
        <dbReference type="HAMAP-Rule" id="MF_00100"/>
    </source>
</evidence>
<evidence type="ECO:0000256" key="3">
    <source>
        <dbReference type="SAM" id="MobiDB-lite"/>
    </source>
</evidence>
<dbReference type="EMBL" id="AM233362">
    <property type="protein sequence ID" value="CAJ80248.1"/>
    <property type="molecule type" value="Genomic_DNA"/>
</dbReference>
<dbReference type="RefSeq" id="WP_011457537.1">
    <property type="nucleotide sequence ID" value="NZ_CP009694.1"/>
</dbReference>
<dbReference type="SMR" id="Q2A1G8"/>
<dbReference type="KEGG" id="ftl:FTL_1809"/>
<dbReference type="Proteomes" id="UP000001944">
    <property type="component" value="Chromosome"/>
</dbReference>
<dbReference type="GO" id="GO:0005829">
    <property type="term" value="C:cytosol"/>
    <property type="evidence" value="ECO:0007669"/>
    <property type="project" value="TreeGrafter"/>
</dbReference>
<dbReference type="GO" id="GO:0005525">
    <property type="term" value="F:GTP binding"/>
    <property type="evidence" value="ECO:0007669"/>
    <property type="project" value="UniProtKB-KW"/>
</dbReference>
<dbReference type="GO" id="GO:0003924">
    <property type="term" value="F:GTPase activity"/>
    <property type="evidence" value="ECO:0007669"/>
    <property type="project" value="UniProtKB-UniRule"/>
</dbReference>
<dbReference type="GO" id="GO:0003743">
    <property type="term" value="F:translation initiation factor activity"/>
    <property type="evidence" value="ECO:0007669"/>
    <property type="project" value="UniProtKB-UniRule"/>
</dbReference>
<dbReference type="CDD" id="cd01887">
    <property type="entry name" value="IF2_eIF5B"/>
    <property type="match status" value="1"/>
</dbReference>
<dbReference type="CDD" id="cd03702">
    <property type="entry name" value="IF2_mtIF2_II"/>
    <property type="match status" value="1"/>
</dbReference>
<dbReference type="CDD" id="cd03692">
    <property type="entry name" value="mtIF2_IVc"/>
    <property type="match status" value="1"/>
</dbReference>
<dbReference type="FunFam" id="2.40.30.10:FF:000007">
    <property type="entry name" value="Translation initiation factor IF-2"/>
    <property type="match status" value="1"/>
</dbReference>
<dbReference type="FunFam" id="2.40.30.10:FF:000008">
    <property type="entry name" value="Translation initiation factor IF-2"/>
    <property type="match status" value="1"/>
</dbReference>
<dbReference type="FunFam" id="3.40.50.10050:FF:000001">
    <property type="entry name" value="Translation initiation factor IF-2"/>
    <property type="match status" value="1"/>
</dbReference>
<dbReference type="FunFam" id="3.40.50.300:FF:000019">
    <property type="entry name" value="Translation initiation factor IF-2"/>
    <property type="match status" value="1"/>
</dbReference>
<dbReference type="Gene3D" id="3.40.50.300">
    <property type="entry name" value="P-loop containing nucleotide triphosphate hydrolases"/>
    <property type="match status" value="1"/>
</dbReference>
<dbReference type="Gene3D" id="3.30.56.50">
    <property type="entry name" value="Putative DNA-binding domain, N-terminal subdomain of bacterial translation initiation factor IF2"/>
    <property type="match status" value="1"/>
</dbReference>
<dbReference type="Gene3D" id="2.40.30.10">
    <property type="entry name" value="Translation factors"/>
    <property type="match status" value="2"/>
</dbReference>
<dbReference type="Gene3D" id="3.40.50.10050">
    <property type="entry name" value="Translation initiation factor IF- 2, domain 3"/>
    <property type="match status" value="1"/>
</dbReference>
<dbReference type="HAMAP" id="MF_00100_B">
    <property type="entry name" value="IF_2_B"/>
    <property type="match status" value="1"/>
</dbReference>
<dbReference type="InterPro" id="IPR009061">
    <property type="entry name" value="DNA-bd_dom_put_sf"/>
</dbReference>
<dbReference type="InterPro" id="IPR053905">
    <property type="entry name" value="EF-G-like_DII"/>
</dbReference>
<dbReference type="InterPro" id="IPR044145">
    <property type="entry name" value="IF2_II"/>
</dbReference>
<dbReference type="InterPro" id="IPR006847">
    <property type="entry name" value="IF2_N"/>
</dbReference>
<dbReference type="InterPro" id="IPR027417">
    <property type="entry name" value="P-loop_NTPase"/>
</dbReference>
<dbReference type="InterPro" id="IPR005225">
    <property type="entry name" value="Small_GTP-bd"/>
</dbReference>
<dbReference type="InterPro" id="IPR000795">
    <property type="entry name" value="T_Tr_GTP-bd_dom"/>
</dbReference>
<dbReference type="InterPro" id="IPR000178">
    <property type="entry name" value="TF_IF2_bacterial-like"/>
</dbReference>
<dbReference type="InterPro" id="IPR015760">
    <property type="entry name" value="TIF_IF2"/>
</dbReference>
<dbReference type="InterPro" id="IPR023115">
    <property type="entry name" value="TIF_IF2_dom3"/>
</dbReference>
<dbReference type="InterPro" id="IPR036925">
    <property type="entry name" value="TIF_IF2_dom3_sf"/>
</dbReference>
<dbReference type="InterPro" id="IPR009000">
    <property type="entry name" value="Transl_B-barrel_sf"/>
</dbReference>
<dbReference type="NCBIfam" id="TIGR00487">
    <property type="entry name" value="IF-2"/>
    <property type="match status" value="1"/>
</dbReference>
<dbReference type="NCBIfam" id="TIGR00231">
    <property type="entry name" value="small_GTP"/>
    <property type="match status" value="1"/>
</dbReference>
<dbReference type="PANTHER" id="PTHR43381:SF5">
    <property type="entry name" value="TR-TYPE G DOMAIN-CONTAINING PROTEIN"/>
    <property type="match status" value="1"/>
</dbReference>
<dbReference type="PANTHER" id="PTHR43381">
    <property type="entry name" value="TRANSLATION INITIATION FACTOR IF-2-RELATED"/>
    <property type="match status" value="1"/>
</dbReference>
<dbReference type="Pfam" id="PF22042">
    <property type="entry name" value="EF-G_D2"/>
    <property type="match status" value="1"/>
</dbReference>
<dbReference type="Pfam" id="PF00009">
    <property type="entry name" value="GTP_EFTU"/>
    <property type="match status" value="1"/>
</dbReference>
<dbReference type="Pfam" id="PF11987">
    <property type="entry name" value="IF-2"/>
    <property type="match status" value="1"/>
</dbReference>
<dbReference type="Pfam" id="PF04760">
    <property type="entry name" value="IF2_N"/>
    <property type="match status" value="2"/>
</dbReference>
<dbReference type="SUPFAM" id="SSF52156">
    <property type="entry name" value="Initiation factor IF2/eIF5b, domain 3"/>
    <property type="match status" value="1"/>
</dbReference>
<dbReference type="SUPFAM" id="SSF52540">
    <property type="entry name" value="P-loop containing nucleoside triphosphate hydrolases"/>
    <property type="match status" value="1"/>
</dbReference>
<dbReference type="SUPFAM" id="SSF46955">
    <property type="entry name" value="Putative DNA-binding domain"/>
    <property type="match status" value="1"/>
</dbReference>
<dbReference type="SUPFAM" id="SSF50447">
    <property type="entry name" value="Translation proteins"/>
    <property type="match status" value="2"/>
</dbReference>
<dbReference type="PROSITE" id="PS51722">
    <property type="entry name" value="G_TR_2"/>
    <property type="match status" value="1"/>
</dbReference>
<dbReference type="PROSITE" id="PS01176">
    <property type="entry name" value="IF2"/>
    <property type="match status" value="1"/>
</dbReference>
<accession>Q2A1G8</accession>
<keyword id="KW-0963">Cytoplasm</keyword>
<keyword id="KW-0342">GTP-binding</keyword>
<keyword id="KW-0396">Initiation factor</keyword>
<keyword id="KW-0547">Nucleotide-binding</keyword>
<keyword id="KW-0648">Protein biosynthesis</keyword>
<keyword id="KW-1185">Reference proteome</keyword>
<proteinExistence type="inferred from homology"/>
<feature type="chain" id="PRO_1000008245" description="Translation initiation factor IF-2">
    <location>
        <begin position="1"/>
        <end position="846"/>
    </location>
</feature>
<feature type="domain" description="tr-type G">
    <location>
        <begin position="345"/>
        <end position="512"/>
    </location>
</feature>
<feature type="region of interest" description="Disordered" evidence="3">
    <location>
        <begin position="199"/>
        <end position="219"/>
    </location>
</feature>
<feature type="region of interest" description="G1" evidence="1">
    <location>
        <begin position="354"/>
        <end position="361"/>
    </location>
</feature>
<feature type="region of interest" description="G2" evidence="1">
    <location>
        <begin position="379"/>
        <end position="383"/>
    </location>
</feature>
<feature type="region of interest" description="G3" evidence="1">
    <location>
        <begin position="400"/>
        <end position="403"/>
    </location>
</feature>
<feature type="region of interest" description="G4" evidence="1">
    <location>
        <begin position="454"/>
        <end position="457"/>
    </location>
</feature>
<feature type="region of interest" description="G5" evidence="1">
    <location>
        <begin position="490"/>
        <end position="492"/>
    </location>
</feature>
<feature type="compositionally biased region" description="Basic residues" evidence="3">
    <location>
        <begin position="207"/>
        <end position="219"/>
    </location>
</feature>
<feature type="binding site" evidence="2">
    <location>
        <begin position="354"/>
        <end position="361"/>
    </location>
    <ligand>
        <name>GTP</name>
        <dbReference type="ChEBI" id="CHEBI:37565"/>
    </ligand>
</feature>
<feature type="binding site" evidence="2">
    <location>
        <begin position="400"/>
        <end position="404"/>
    </location>
    <ligand>
        <name>GTP</name>
        <dbReference type="ChEBI" id="CHEBI:37565"/>
    </ligand>
</feature>
<feature type="binding site" evidence="2">
    <location>
        <begin position="454"/>
        <end position="457"/>
    </location>
    <ligand>
        <name>GTP</name>
        <dbReference type="ChEBI" id="CHEBI:37565"/>
    </ligand>
</feature>